<feature type="chain" id="PRO_1000046830" description="Probable flagellum biosynthesis repressor protein FlbT">
    <location>
        <begin position="1"/>
        <end position="152"/>
    </location>
</feature>
<evidence type="ECO:0000255" key="1">
    <source>
        <dbReference type="HAMAP-Rule" id="MF_00783"/>
    </source>
</evidence>
<accession>A5VVZ5</accession>
<sequence>MAANSKTAIRLSLRAGERIFINGAVLRADRKVSLELLNDATFLLENHVLQPEDTTTPLRQLYFAAQMMLIEPAMREQAGATFAQMLKGMFATFKDAEILNALKLVDELVHNGRVFEALKTIRAQYPREAELMGAQPVVWPVTKSGKSAGANP</sequence>
<organism>
    <name type="scientific">Brucella ovis (strain ATCC 25840 / 63/290 / NCTC 10512)</name>
    <dbReference type="NCBI Taxonomy" id="444178"/>
    <lineage>
        <taxon>Bacteria</taxon>
        <taxon>Pseudomonadati</taxon>
        <taxon>Pseudomonadota</taxon>
        <taxon>Alphaproteobacteria</taxon>
        <taxon>Hyphomicrobiales</taxon>
        <taxon>Brucellaceae</taxon>
        <taxon>Brucella/Ochrobactrum group</taxon>
        <taxon>Brucella</taxon>
    </lineage>
</organism>
<reference key="1">
    <citation type="journal article" date="2009" name="PLoS ONE">
        <title>Genome degradation in Brucella ovis corresponds with narrowing of its host range and tissue tropism.</title>
        <authorList>
            <person name="Tsolis R.M."/>
            <person name="Seshadri R."/>
            <person name="Santos R.L."/>
            <person name="Sangari F.J."/>
            <person name="Lobo J.M."/>
            <person name="de Jong M.F."/>
            <person name="Ren Q."/>
            <person name="Myers G."/>
            <person name="Brinkac L.M."/>
            <person name="Nelson W.C."/>
            <person name="Deboy R.T."/>
            <person name="Angiuoli S."/>
            <person name="Khouri H."/>
            <person name="Dimitrov G."/>
            <person name="Robinson J.R."/>
            <person name="Mulligan S."/>
            <person name="Walker R.L."/>
            <person name="Elzer P.E."/>
            <person name="Hassan K.A."/>
            <person name="Paulsen I.T."/>
        </authorList>
    </citation>
    <scope>NUCLEOTIDE SEQUENCE [LARGE SCALE GENOMIC DNA]</scope>
    <source>
        <strain>ATCC 25840 / 63/290 / NCTC 10512</strain>
    </source>
</reference>
<dbReference type="EMBL" id="CP000709">
    <property type="protein sequence ID" value="ABQ62695.1"/>
    <property type="molecule type" value="Genomic_DNA"/>
</dbReference>
<dbReference type="RefSeq" id="WP_004680988.1">
    <property type="nucleotide sequence ID" value="NC_009504.1"/>
</dbReference>
<dbReference type="GeneID" id="97535830"/>
<dbReference type="KEGG" id="bov:BOV_A1040"/>
<dbReference type="HOGENOM" id="CLU_130913_1_0_5"/>
<dbReference type="PhylomeDB" id="A5VVZ5"/>
<dbReference type="Proteomes" id="UP000006383">
    <property type="component" value="Chromosome II"/>
</dbReference>
<dbReference type="GO" id="GO:0048027">
    <property type="term" value="F:mRNA 5'-UTR binding"/>
    <property type="evidence" value="ECO:0007669"/>
    <property type="project" value="UniProtKB-UniRule"/>
</dbReference>
<dbReference type="GO" id="GO:0044781">
    <property type="term" value="P:bacterial-type flagellum organization"/>
    <property type="evidence" value="ECO:0007669"/>
    <property type="project" value="UniProtKB-KW"/>
</dbReference>
<dbReference type="GO" id="GO:0006402">
    <property type="term" value="P:mRNA catabolic process"/>
    <property type="evidence" value="ECO:0007669"/>
    <property type="project" value="InterPro"/>
</dbReference>
<dbReference type="GO" id="GO:1902209">
    <property type="term" value="P:negative regulation of bacterial-type flagellum assembly"/>
    <property type="evidence" value="ECO:0007669"/>
    <property type="project" value="UniProtKB-UniRule"/>
</dbReference>
<dbReference type="HAMAP" id="MF_00783">
    <property type="entry name" value="FlbT"/>
    <property type="match status" value="1"/>
</dbReference>
<dbReference type="InterPro" id="IPR009967">
    <property type="entry name" value="Flagellum_FlbT"/>
</dbReference>
<dbReference type="NCBIfam" id="NF001995">
    <property type="entry name" value="PRK00794.1-1"/>
    <property type="match status" value="1"/>
</dbReference>
<dbReference type="Pfam" id="PF07378">
    <property type="entry name" value="FlbT"/>
    <property type="match status" value="1"/>
</dbReference>
<dbReference type="PIRSF" id="PIRSF009533">
    <property type="entry name" value="FlbT"/>
    <property type="match status" value="1"/>
</dbReference>
<proteinExistence type="inferred from homology"/>
<comment type="function">
    <text evidence="1">Has a post-transcriptional repressor function in flagellum biogenesis. Associates with the 5'-UTR of fljK mRNA and promotes its degradation.</text>
</comment>
<comment type="similarity">
    <text evidence="1">Belongs to the FlbT family.</text>
</comment>
<name>FLBT_BRUO2</name>
<gene>
    <name evidence="1" type="primary">flbT</name>
    <name type="ordered locus">BOV_A1040</name>
</gene>
<protein>
    <recommendedName>
        <fullName evidence="1">Probable flagellum biosynthesis repressor protein FlbT</fullName>
    </recommendedName>
</protein>
<keyword id="KW-1005">Bacterial flagellum biogenesis</keyword>
<keyword id="KW-0678">Repressor</keyword>
<keyword id="KW-0694">RNA-binding</keyword>